<reference evidence="41" key="1">
    <citation type="journal article" date="1984" name="Gene">
        <title>Structural analysis of the dnaA and dnaN genes of Escherichia coli.</title>
        <authorList>
            <person name="Ohmori H."/>
            <person name="Kimura M."/>
            <person name="Nagata T."/>
            <person name="Sakakibara Y."/>
        </authorList>
    </citation>
    <scope>NUCLEOTIDE SEQUENCE [GENOMIC DNA]</scope>
    <scope>MUTAGENESIS OF GLY-174 AND 265-GLN--LEU-366</scope>
    <source>
        <strain>K12</strain>
    </source>
</reference>
<reference evidence="40" key="2">
    <citation type="journal article" date="1993" name="Genomics">
        <title>DNA sequence and analysis of 136 kilobases of the Escherichia coli genome: organizational symmetry around the origin of replication.</title>
        <authorList>
            <person name="Burland V.D."/>
            <person name="Plunkett G. III"/>
            <person name="Daniels D.L."/>
            <person name="Blattner F.R."/>
        </authorList>
    </citation>
    <scope>NUCLEOTIDE SEQUENCE [LARGE SCALE GENOMIC DNA]</scope>
    <source>
        <strain>K12 / MG1655 / ATCC 47076</strain>
    </source>
</reference>
<reference evidence="42" key="3">
    <citation type="journal article" date="1997" name="Science">
        <title>The complete genome sequence of Escherichia coli K-12.</title>
        <authorList>
            <person name="Blattner F.R."/>
            <person name="Plunkett G. III"/>
            <person name="Bloch C.A."/>
            <person name="Perna N.T."/>
            <person name="Burland V."/>
            <person name="Riley M."/>
            <person name="Collado-Vides J."/>
            <person name="Glasner J.D."/>
            <person name="Rode C.K."/>
            <person name="Mayhew G.F."/>
            <person name="Gregor J."/>
            <person name="Davis N.W."/>
            <person name="Kirkpatrick H.A."/>
            <person name="Goeden M.A."/>
            <person name="Rose D.J."/>
            <person name="Mau B."/>
            <person name="Shao Y."/>
        </authorList>
    </citation>
    <scope>NUCLEOTIDE SEQUENCE [LARGE SCALE GENOMIC DNA]</scope>
    <source>
        <strain>K12 / MG1655 / ATCC 47076</strain>
    </source>
</reference>
<reference evidence="43" key="4">
    <citation type="journal article" date="2006" name="Mol. Syst. Biol.">
        <title>Highly accurate genome sequences of Escherichia coli K-12 strains MG1655 and W3110.</title>
        <authorList>
            <person name="Hayashi K."/>
            <person name="Morooka N."/>
            <person name="Yamamoto Y."/>
            <person name="Fujita K."/>
            <person name="Isono K."/>
            <person name="Choi S."/>
            <person name="Ohtsubo E."/>
            <person name="Baba T."/>
            <person name="Wanner B.L."/>
            <person name="Mori H."/>
            <person name="Horiuchi T."/>
        </authorList>
    </citation>
    <scope>NUCLEOTIDE SEQUENCE [LARGE SCALE GENOMIC DNA]</scope>
    <source>
        <strain>K12 / W3110 / ATCC 27325 / DSM 5911</strain>
    </source>
</reference>
<reference evidence="37" key="5">
    <citation type="journal article" date="1988" name="J. Biol. Chem.">
        <title>Transcriptional organization of the dnaN and recF genes of Escherichia coli K-12.</title>
        <authorList>
            <person name="Armengod M.E.E."/>
            <person name="Garcca-Sogo M."/>
            <person name="Lambies E."/>
        </authorList>
    </citation>
    <scope>NUCLEOTIDE SEQUENCE [GENOMIC DNA] OF 1-14</scope>
</reference>
<reference evidence="39" key="6">
    <citation type="journal article" date="1986" name="Gene">
        <title>Overlapping arrangement of the recF and dnaN operons of Escherichia coli; positive and negative control sequences.</title>
        <authorList>
            <person name="Armengod M.E.E."/>
            <person name="Lambies E."/>
        </authorList>
    </citation>
    <scope>NUCLEOTIDE SEQUENCE [GENOMIC DNA] OF 143-170</scope>
</reference>
<reference evidence="38" key="7">
    <citation type="journal article" date="1984" name="Proc. Natl. Acad. Sci. U.S.A.">
        <title>Molecular analysis of the recF gene of Escherichia coli.</title>
        <authorList>
            <person name="Blanar M.A."/>
            <person name="Sandler S.J."/>
            <person name="Armengod M.-E."/>
            <person name="Ream L.W."/>
            <person name="Clark A.J."/>
        </authorList>
    </citation>
    <scope>NUCLEOTIDE SEQUENCE [GENOMIC DNA] OF 297-366</scope>
</reference>
<reference evidence="44" key="8">
    <citation type="journal article" date="1984" name="Nucleic Acids Res.">
        <title>DNA sequence and transcription of the region upstream of the E. coli gyrB gene.</title>
        <authorList>
            <person name="Adachi T."/>
            <person name="Mizuuchi K."/>
            <person name="Menzel R."/>
            <person name="Gellert M."/>
        </authorList>
    </citation>
    <scope>NUCLEOTIDE SEQUENCE [GENOMIC DNA] OF 342-366</scope>
</reference>
<reference key="9">
    <citation type="journal article" date="1986" name="J. Biol. Chem.">
        <title>The beta subunit of the Escherichia coli DNA polymerase III holoenzyme interacts functionally with the catalytic core in the absence of other subunits.</title>
        <authorList>
            <person name="LaDuca R.J."/>
            <person name="Crute J.J."/>
            <person name="McHenry C.S."/>
            <person name="Bambara R.A."/>
        </authorList>
    </citation>
    <scope>FUNCTION AS PROCESSIVITY FACTOR</scope>
</reference>
<reference key="10">
    <citation type="journal article" date="1988" name="Mol. Gen. Genet.">
        <title>Discoordinate gene expression in the dnaA-dnaN operon of Escherichia coli.</title>
        <authorList>
            <person name="Quinones A."/>
            <person name="Messer W."/>
        </authorList>
    </citation>
    <scope>INDUCTION</scope>
    <source>
        <strain>K12 / AB1157</strain>
    </source>
</reference>
<reference key="11">
    <citation type="journal article" date="1997" name="Electrophoresis">
        <title>Escherichia coli proteome analysis using the gene-protein database.</title>
        <authorList>
            <person name="VanBogelen R.A."/>
            <person name="Abshire K.Z."/>
            <person name="Moldover B."/>
            <person name="Olson E.R."/>
            <person name="Neidhardt F.C."/>
        </authorList>
    </citation>
    <scope>IDENTIFICATION BY 2D-GEL</scope>
</reference>
<reference key="12">
    <citation type="journal article" date="1991" name="J. Biol. Chem.">
        <title>Escherichia coli DNA polymerase II is stimulated by DNA polymerase III holoenzyme auxiliary subunits.</title>
        <authorList>
            <person name="Hughes A.J. Jr."/>
            <person name="Bryan S.K."/>
            <person name="Chen H."/>
            <person name="Moses R.E."/>
            <person name="McHenry C.S."/>
        </authorList>
    </citation>
    <scope>FUNCTION WITH DNA POLYMERASE II (POLB)</scope>
    <scope>SUBUNIT</scope>
</reference>
<reference key="13">
    <citation type="journal article" date="1991" name="J. Biol. Chem.">
        <title>Mechanism of the sliding beta-clamp of DNA polymerase III holoenzyme.</title>
        <authorList>
            <person name="Stukenberg P.T."/>
            <person name="Studwell-Vaughan P.S."/>
            <person name="O'Donnell M."/>
        </authorList>
    </citation>
    <scope>FUNCTION AS A TETHER</scope>
    <scope>SUBUNIT</scope>
    <scope>INTERACTION WITH DNAE</scope>
</reference>
<reference key="14">
    <citation type="journal article" date="1992" name="J. Biol. Chem.">
        <title>Processive DNA synthesis by DNA polymerase II mediated by DNA polymerase III accessory proteins.</title>
        <authorList>
            <person name="Bonner C.A."/>
            <person name="Stukenberg P.T."/>
            <person name="Rajagopalan M."/>
            <person name="Eritja R."/>
            <person name="O'Donnell M."/>
            <person name="McEntee K."/>
            <person name="Echols H."/>
            <person name="Goodman M.F."/>
        </authorList>
    </citation>
    <scope>FUNCTION WITH DNA POLYMERASE II (POLB)</scope>
    <scope>SUBUNIT</scope>
</reference>
<reference key="15">
    <citation type="journal article" date="1996" name="J. Biol. Chem.">
        <title>A smaller form of the sliding clamp subunit of DNA polymerase III is induced by UV irradiation in Escherichia coli.</title>
        <authorList>
            <person name="Skaliter R."/>
            <person name="Paz-Elizur T."/>
            <person name="Livneh Z."/>
        </authorList>
    </citation>
    <scope>IDENTIFICATION OF ISOFORM BETA*</scope>
    <scope>FUNCTION</scope>
    <scope>INDUCTION BY UV</scope>
    <source>
        <strain>K12 / MC4100 / ATCC 35695 / DSM 6574</strain>
    </source>
</reference>
<reference key="16">
    <citation type="journal article" date="1996" name="J. Biol. Chem.">
        <title>Beta*, a UV-inducible smaller form of the beta subunit sliding clamp of DNA polymerase III of Escherichia coli. I. Gene expression and regulation.</title>
        <authorList>
            <person name="Paz-Elizur T."/>
            <person name="Skaliter R."/>
            <person name="Blumenstein S."/>
            <person name="Livneh Z."/>
        </authorList>
    </citation>
    <scope>ALTERNATIVE PROMOTER USAGE (ISOFORMS BETA AND BETA*)</scope>
    <scope>INDUCTION BY NALIDIXIC ACID</scope>
    <scope>MUTAGENESIS OF ALA-133; MET-135 AND MET-146</scope>
    <source>
        <strain>K12 / MC4100 / ATCC 35695 / DSM 6574</strain>
    </source>
</reference>
<reference key="17">
    <citation type="journal article" date="1996" name="J. Biol. Chem.">
        <title>Beta*, a UV-inducible shorter form of the beta subunit of DNA polymerase III of Escherichia coli. II. Overproduction, purification, and activity as a polymerase processivity clamp.</title>
        <authorList>
            <person name="Skaliter R."/>
            <person name="Bergstein M."/>
            <person name="Livneh Z."/>
        </authorList>
    </citation>
    <scope>CHARACTERIZATION OF BETA*</scope>
    <scope>SUBUNIT</scope>
</reference>
<reference key="18">
    <citation type="journal article" date="1998" name="Cell">
        <title>The initiator function of DnaA protein is negatively regulated by the sliding clamp of the E. coli chromosomal replicase.</title>
        <authorList>
            <person name="Katayama T."/>
            <person name="Kubota T."/>
            <person name="Kurokawa K."/>
            <person name="Crooke E."/>
            <person name="Sekimizu K."/>
        </authorList>
    </citation>
    <scope>FUNCTION IN DNAA INACTIVATION</scope>
    <scope>SUBUNIT</scope>
</reference>
<reference key="19">
    <citation type="journal article" date="1999" name="EMBO J.">
        <title>The internal workings of a DNA polymerase clamp-loading machine.</title>
        <authorList>
            <person name="Turner J."/>
            <person name="Hingorani M.M."/>
            <person name="Kelman Z."/>
            <person name="O'Donnell M."/>
        </authorList>
    </citation>
    <scope>RING OPENING BY DELTA SUBUNIT (HOLA)</scope>
    <scope>SUBUNIT</scope>
</reference>
<reference key="20">
    <citation type="journal article" date="2000" name="Nature">
        <title>Roles of E. coli DNA polymerases IV and V in lesion-targeted and untargeted SOS mutagenesis.</title>
        <authorList>
            <person name="Tang M."/>
            <person name="Pham P."/>
            <person name="Shen X."/>
            <person name="Taylor J.S."/>
            <person name="O'Donnell M."/>
            <person name="Woodgate R."/>
            <person name="Goodman M.F."/>
        </authorList>
    </citation>
    <scope>FUNCTION WITH DNA POLYMERASES IV (DINB) AND V (UMUCD)</scope>
</reference>
<reference key="21">
    <citation type="journal article" date="2001" name="Proc. Natl. Acad. Sci. U.S.A.">
        <title>Interaction of the beta sliding clamp with MutS, ligase, and DNA polymerase I.</title>
        <authorList>
            <person name="Lopez de Saro F.J."/>
            <person name="O'Donnell M."/>
        </authorList>
    </citation>
    <scope>INTERACTION WITH MUTS; LIGASE AND POLA</scope>
</reference>
<reference key="22">
    <citation type="journal article" date="2001" name="Proc. Natl. Acad. Sci. U.S.A.">
        <title>A universal protein-protein interaction motif in the eubacterial DNA replication and repair systems.</title>
        <authorList>
            <person name="Dalrymple B.P."/>
            <person name="Kongsuwan K."/>
            <person name="Wijffels G."/>
            <person name="Dixon N.E."/>
            <person name="Jennings P.A."/>
        </authorList>
    </citation>
    <scope>INTERACTION WITH DINB; DNAE; HOLA; MUTS; POLB AND UMUC</scope>
    <source>
        <strain>K12 / XL1-Blue</strain>
    </source>
</reference>
<reference key="23">
    <citation type="journal article" date="2004" name="Biochemistry">
        <title>Inhibition of protein interactions with the beta(2) sliding clamp of Escherichia coli DNA polymerase III by peptides from beta(2)-binding proteins.</title>
        <authorList>
            <person name="Wijffels G."/>
            <person name="Dalrymple B.P."/>
            <person name="Prosselkov P."/>
            <person name="Kongsuwan K."/>
            <person name="Epa V.C."/>
            <person name="Lilley P.E."/>
            <person name="Jergic S."/>
            <person name="Buchardt J."/>
            <person name="Brown S.E."/>
            <person name="Alewood P.F."/>
            <person name="Jennings P.A."/>
            <person name="Dixon N.E."/>
        </authorList>
    </citation>
    <scope>CONSENSUS SEQUENCE FOR BINDING TO THE SLIDING CLAMP</scope>
</reference>
<reference key="24">
    <citation type="journal article" date="2004" name="J. Bacteriol.">
        <title>Interaction of the sliding clamp beta-subunit and Hda, a DnaA-related protein.</title>
        <authorList>
            <person name="Kurz M."/>
            <person name="Dalrymple B."/>
            <person name="Wijffels G."/>
            <person name="Kongsuwan K."/>
        </authorList>
    </citation>
    <scope>INTERACTION WITH HDA</scope>
</reference>
<reference key="25">
    <citation type="journal article" date="2004" name="J. Bacteriol.">
        <title>The Escherichia coli dnaN159 mutant displays altered DNA polymerase usage and chronic SOS induction.</title>
        <authorList>
            <person name="Sutton M.D."/>
        </authorList>
    </citation>
    <scope>FUNCTION AT REPLICATION FORK</scope>
    <scope>INTERACTION WITH DNAE</scope>
    <scope>MUTAGENESIS OF GLY-66 AND GLY-174</scope>
</reference>
<reference key="26">
    <citation type="journal article" date="2005" name="Mol. Cell">
        <title>A sliding-clamp toolbelt binds high- and low-fidelity DNA polymerases simultaneously.</title>
        <authorList>
            <person name="Indiani C."/>
            <person name="McInerney P."/>
            <person name="Georgescu R."/>
            <person name="Goodman M.F."/>
            <person name="O'Donnell M."/>
        </authorList>
    </citation>
    <scope>FUNCTION IN POLYMERASE CHOICE</scope>
    <scope>SUBUNIT</scope>
    <scope>MUTAGENESIS OF 272-ILE-LEU-273</scope>
</reference>
<reference key="27">
    <citation type="journal article" date="2008" name="J. Biol. Chem.">
        <title>Hda monomerization by ADP binding promotes replicase clamp-mediated DnaA-ATP hydrolysis.</title>
        <authorList>
            <person name="Su'etsugu M."/>
            <person name="Nakamura K."/>
            <person name="Keyamura K."/>
            <person name="Kudo Y."/>
            <person name="Katayama T."/>
        </authorList>
    </citation>
    <scope>IDENTIFICATION IN RIDA COMPLEX</scope>
</reference>
<reference key="28">
    <citation type="journal article" date="2009" name="Mol. Cell">
        <title>Hydroxyurea induces hydroxyl radical-mediated cell death in Escherichia coli.</title>
        <authorList>
            <person name="Davies B.W."/>
            <person name="Kohanski M.A."/>
            <person name="Simmons L.A."/>
            <person name="Winkler J.A."/>
            <person name="Collins J.J."/>
            <person name="Walker G.C."/>
        </authorList>
    </citation>
    <scope>INDUCTION BY HYDROXYUREA</scope>
    <source>
        <strain>K12 / MC4100 / ATCC 35695 / DSM 6574</strain>
    </source>
</reference>
<reference key="29">
    <citation type="journal article" date="2010" name="Science">
        <title>Stoichiometry and architecture of active DNA replication machinery in Escherichia coli.</title>
        <authorList>
            <person name="Reyes-Lamothe R."/>
            <person name="Sherratt D.J."/>
            <person name="Leake M.C."/>
        </authorList>
    </citation>
    <scope>REPLISOME COMPLEX</scope>
    <scope>SUBUNIT</scope>
</reference>
<reference key="30">
    <citation type="journal article" date="2011" name="Nat. Struct. Mol. Biol.">
        <title>Single-molecule studies reveal the function of a third polymerase in the replisome.</title>
        <authorList>
            <person name="Georgescu R.E."/>
            <person name="Kurth I."/>
            <person name="O'Donnell M.E."/>
        </authorList>
    </citation>
    <scope>REPLISOME COMPLEX</scope>
    <scope>SUBUNIT</scope>
</reference>
<reference key="31">
    <citation type="journal article" date="2012" name="Mol. Microbiol.">
        <title>Evidence for roles of the Escherichia coli Hda protein beyond regulatory inactivation of DnaA.</title>
        <authorList>
            <person name="Baxter J.C."/>
            <person name="Sutton M.D."/>
        </authorList>
    </citation>
    <scope>FUNCTION IN REPLICATION FORK</scope>
    <scope>SUBUNIT</scope>
</reference>
<reference key="32">
    <citation type="journal article" date="2013" name="Cell Rep.">
        <title>A replicase clamp-binding dynamin-like protein promotes colocalization of nascent DNA strands and equipartitioning of chromosomes in E. coli.</title>
        <authorList>
            <person name="Ozaki S."/>
            <person name="Matsuda Y."/>
            <person name="Keyamura K."/>
            <person name="Kawakami H."/>
            <person name="Noguchi Y."/>
            <person name="Kasho K."/>
            <person name="Nagata K."/>
            <person name="Masuda T."/>
            <person name="Sakiyama Y."/>
            <person name="Katayama T."/>
        </authorList>
    </citation>
    <scope>INTERACTION WITH CRFC</scope>
    <scope>SUBUNIT</scope>
    <scope>SUBCELLULAR LOCATION</scope>
    <source>
        <strain>K12 / MG1655 / ATCC 47076</strain>
    </source>
</reference>
<reference evidence="50" key="33">
    <citation type="journal article" date="1992" name="Cell">
        <title>Three-dimensional structure of the beta subunit of E. coli DNA polymerase III holoenzyme: a sliding DNA clamp.</title>
        <authorList>
            <person name="Kong X.-P."/>
            <person name="Onrust R."/>
            <person name="O'Donnell M."/>
            <person name="Kuriyan J."/>
        </authorList>
    </citation>
    <scope>X-RAY CRYSTALLOGRAPHY (2.5 ANGSTROMS)</scope>
</reference>
<reference evidence="45 46" key="34">
    <citation type="journal article" date="2001" name="Cell">
        <title>Mechanism of processivity clamp opening by the delta subunit wrench of the clamp loader complex of E. coli DNA polymerase III.</title>
        <authorList>
            <person name="Jeruzalmi D."/>
            <person name="Yurieva O."/>
            <person name="Zhao Y."/>
            <person name="Young M."/>
            <person name="Stewart J."/>
            <person name="Hingorani M."/>
            <person name="O'Donnell M."/>
            <person name="Kuriyan J."/>
        </authorList>
    </citation>
    <scope>X-RAY CRYSTALLOGRAPHY (2.50 ANGSTROMS) IN COMPLEX WITH DELTA SUBUNIT (HOLA)</scope>
    <scope>PROBABLE MECHANISM OF CLAMP OPENING</scope>
    <scope>MUTAGENESIS OF 272-ILE-LEU-273</scope>
</reference>
<reference evidence="47" key="35">
    <citation type="journal article" date="2003" name="Acta Crystallogr. D">
        <title>Flexibility revealed by the 1.85 A crystal structure of the beta sliding-clamp subunit of Escherichia coli DNA polymerase III.</title>
        <authorList>
            <person name="Oakley A.J."/>
            <person name="Prosselkov P."/>
            <person name="Wijffels G."/>
            <person name="Beck J.L."/>
            <person name="Wilce M.C."/>
            <person name="Dixon N.E."/>
        </authorList>
    </citation>
    <scope>X-RAY CRYSTALLOGRAPHY (1.85 ANGSTROMS)</scope>
</reference>
<reference evidence="49" key="36">
    <citation type="journal article" date="2003" name="EMBO J.">
        <title>Structural basis for recruitment of translesion DNA polymerase Pol IV/DinB to the beta-clamp.</title>
        <authorList>
            <person name="Bunting K.A."/>
            <person name="Roe S.M."/>
            <person name="Pearl L.H."/>
        </authorList>
    </citation>
    <scope>X-RAY CRYSTALLOGRAPHY (1.9 ANGSTROMS) IN COMPLEX WITH DINB</scope>
    <scope>FUNCTION</scope>
</reference>
<reference evidence="48" key="37">
    <citation type="journal article" date="2004" name="J. Mol. Biol.">
        <title>Structural and biochemical analysis of sliding clamp/ligand interactions suggest a competition between replicative and translesion DNA polymerases.</title>
        <authorList>
            <person name="Burnouf D.Y."/>
            <person name="Olieric V."/>
            <person name="Wagner J."/>
            <person name="Fujii S."/>
            <person name="Reinbolt J."/>
            <person name="Fuchs R.P."/>
            <person name="Dumas P."/>
        </authorList>
    </citation>
    <scope>X-RAY CRYSTALLOGRAPHY (1.65 ANGSTROMS) IN COMPLEX WITH PEPTIDE OF DINB</scope>
    <scope>FUNCTION</scope>
    <scope>SUBUNIT</scope>
</reference>
<reference evidence="51" key="38">
    <citation type="journal article" date="2008" name="Cell">
        <title>Structure of a sliding clamp on DNA.</title>
        <authorList>
            <person name="Georgescu R.E."/>
            <person name="Kim S.S."/>
            <person name="Yurieva O."/>
            <person name="Kuriyan J."/>
            <person name="Kong X.P."/>
            <person name="O'Donnell M."/>
        </authorList>
    </citation>
    <scope>X-RAY CRYSTALLOGRAPHY (1.92 ANGSTROMS) IN COMPLEX WITH PRIMED DNA</scope>
    <scope>FUNCTION</scope>
    <scope>SUBUNIT</scope>
    <scope>DNA-BINDING</scope>
    <scope>MUTAGENESIS OF ARG-24; GLN-149; 153-TYR-TYR-154 AND 272-ILE-LEU-273</scope>
</reference>
<reference evidence="52 53 54" key="39">
    <citation type="journal article" date="2008" name="Proc. Natl. Acad. Sci. U.S.A.">
        <title>Structure of a small-molecule inhibitor of a DNA polymerase sliding clamp.</title>
        <authorList>
            <person name="Georgescu R.E."/>
            <person name="Yurieva O."/>
            <person name="Kim S.S."/>
            <person name="Kuriyan J."/>
            <person name="Kong X.P."/>
            <person name="O'Donnell M."/>
        </authorList>
    </citation>
    <scope>X-RAY CRYSTALLOGRAPHY (1.64 ANGSTROMS) IN COMPLEX WITH VARIOUS PEPTIDES</scope>
    <scope>SUBUNIT</scope>
    <scope>BIOTECHNOLOGY</scope>
</reference>
<reference evidence="55 56 57" key="40">
    <citation type="journal article" date="2015" name="Elife">
        <title>cryo-EM structures of the E. coli replicative DNA polymerase reveal its dynamic interactions with the DNA sliding clamp, exonuclease and tau.</title>
        <authorList>
            <person name="Fernandez-Leiro R."/>
            <person name="Conrad J."/>
            <person name="Scheres S.H."/>
            <person name="Lamers M.H."/>
        </authorList>
    </citation>
    <scope>STRUCTURE BY ELECTRON MICROSCOPY (7.30 ANGSTROMS) OF DNAE; DNAN; DNAQ; DNAX WITH AND WITHOUT DNA</scope>
    <scope>FUNCTION</scope>
    <scope>SUBUNIT</scope>
    <scope>DNA-BINDING</scope>
</reference>
<reference key="41">
    <citation type="journal article" date="1992" name="Bioessays">
        <title>Accessory protein function in the DNA polymerase III holoenzyme from E. coli.</title>
        <authorList>
            <person name="O'Donnell M."/>
        </authorList>
    </citation>
    <scope>REVIEW</scope>
</reference>
<reference key="42">
    <citation type="journal article" date="2005" name="Annu. Rev. Biochem.">
        <title>Cellular DNA replicases: components and dynamics at the replication fork.</title>
        <authorList>
            <person name="Johnson A."/>
            <person name="O'Donnell M."/>
        </authorList>
    </citation>
    <scope>REVIEW</scope>
</reference>
<sequence length="366" mass="40587">MKFTVEREHLLKPLQQVSGPLGGRPTLPILGNLLLQVADGTLSLTGTDLEMEMVARVALVQPHEPGATTVPARKFFDICRGLPEGAEIAVQLEGERMLVRSGRSRFSLSTLPAADFPNLDDWQSEVEFTLPQATMKRLIEATQFSMAHQDVRYYLNGMLFETEGEELRTVATDGHRLAVCSMPIGQSLPSHSVIVPRKGVIELMRMLDGGDNPLRVQIGSNNIRAHVGDFIFTSKLVDGRFPDYRRVLPKNPDKHLEAGCDLLKQAFARAAILSNEKFRGVRLYVSENQLKITANNPEQEEAEEILDVTYSGAEMEIGFNVSYVLDVLNALKCENVRMMLTDSVSSVQIEDAASQSAAYVVMPMRL</sequence>
<comment type="function">
    <text evidence="1 7 8 11 12 13 14 17 19 22 24 26 28 30 35">Confers DNA tethering and processivity to DNA polymerases and other proteins. Acts as a clamp, forming a ring around DNA (a reaction catalyzed by the clamp-loading complex) which diffuses in an ATP-independent manner freely and bidirectionally along dsDNA (PubMed:2040637). DNA bound in the ring is bent 22 degrees, in solution primed DNA is bound more tightly than dsDNA, suggesting the clamp binds both ss- and dsDNA (PubMed:18191219). In a complex of DNA with this protein, alpha, epsilon and tau subunits however the DNA is only slightly bent (PubMed:26499492). Coordinates protein traffic at the replication fork, where it interacts with multiple DNA polymerases, repair factors and other proteins (PubMed:14592985, PubMed:14729336, PubMed:15466025, PubMed:15952889, PubMed:16168375, PubMed:22716942, PubMed:26499492). Initially characterized for its ability to contact the alpha subunit (dnaE) of DNA polymerase III (Pol III), tethering it to the DNA and conferring very high processivity (PubMed:2040637). Pol III is a complex, multichain enzyme responsible for most of the replicative synthesis in bacteria; it also exhibits 3'-5' exonuclease proofreading activity. The beta chain is required for initiation of replication as well as for processivity of DNA replication (PubMed:2040637, PubMed:3519609). A single clamp can bind both Pol III and IV, allowing the repair Pol IV to access DNA when it is damaged and needs to be fixed, a process the replicative polymerase cannot perform; when DNA is repaired Pol III takes over again (PubMed:16168375). Serves as a processivity factor for DNA polymerases II (PubMed:1999435, PubMed:1534562), IV (PubMed:10801133) and V (PubMed:10801133). A shorter protein beta* may be important for increasing survival after UV irradiation, and stimulates DNA synthesis with increased processivity in the presence of core Pol III plus the clamp loader complex (PubMed:8576210, PubMed:8576212).</text>
</comment>
<comment type="function">
    <text evidence="31">Required for DnaA inactivation. The RIDA complex (regulatory inactivation of DnaA), composed of ATP-DnaA, Hda and the DNA-loaded beta sliding clamp (this protein) rapidly hydrolyzes ATP-DnaA to ADP-DnaA in a DNA-dependent fashion, preventing reinitiation of DNA replication (PubMed:9674428). DnaA inactivation is stimulated by DNA synthesis (PubMed:9674428).</text>
</comment>
<comment type="subunit">
    <text evidence="2 3 4 5 6 7 8 9 10 11 12 13 14 15 16 17 19 20 21 22 23 24 30 31 32">Forms a ring-shaped head-to-tail homodimer (PubMed:2040637, PubMed:9927437, PubMed:1349852, PubMed:12832762, PubMed:14592985, PubMed:14729336, PubMed:18191219, PubMed:18678908) around DNA (PubMed:18191219), which can be opened by the delta subunit (PubMed:11525728, PubMed:9927437). Binds interacting factors in a hydrophobic surface cleft between domains 2 and 3, each monomer is able to bind different proteins simultaneously (PubMed:11525728, PubMed:14592985, PubMed:14729336, PubMed:16168375, PubMed:26499492). The beta* isoform probably forms homotrimers which probably load onto DNA (PubMed:8576212). The DNA polymerase III holoenzyme complex contains at least 10 different subunits organized into 3 functionally essential subassemblies: the Pol III core, the beta sliding clamp processivity factor and the clamp-loading complex. The Pol III core (subunits alpha, epsilon and theta) contains the polymerase and the 3'-5' exonuclease proofreading activities. The polymerase is tethered to the template via the dimeric beta sliding clamp processivity factor (this entry) (PubMed:15466025). The clamp loader (also called gamma complex) assembles the beta sliding clamp onto the primed template and plays a central role in the organization and communication at the replication fork. The clamp loader contains delta, delta', psi and chi, and 3 copies of either or both of two different DnaX proteins, gamma and tau. The DNA replisome complex has a single clamp loader (3 tau and 1 each of delta, delta', psi and chi subunits) which binds 3 Pol III cores (1 core on the leading strand and 2 on the lagging strand) each with a beta sliding clamp dimer. Additional proteins in the replisome are other copies of gamma, psi and chi, Ssb, DNA helicase and RNA primase (PubMed:20413500, PubMed:22157955, PubMed:26499492). The beta sliding clamp can also be part of the RIDA complex (regulatory inactivation of DnaA), consisting of ATP-DnaA, ADP-Hda and DNA-loaded beta clamp (PubMed:9674428, PubMed:15150238, PubMed:18977760, PubMed:22716942). Also interacts with a number of other DNA machines such as DNA polymerases I (PubMed:11459978), II (PubMed:1999435, PubMed:1534562), IV (PubMed:14729336) and V, DNA mismatch repair enzyme MutS (PubMed:11459978, PubMed:11573000) and DNA ligase (PubMed:11459978). Binds to CrfC homooligomers at the midcell position during DNA replication (PubMed:23994470). Many proteins that bind the beta sliding clamp have the consensus sequence Gln-Leu[Ser/Asp]Leu-Phe (PubMed:15134440).</text>
</comment>
<comment type="interaction">
    <interactant intactId="EBI-542385">
        <id>P0A988</id>
    </interactant>
    <interactant intactId="EBI-545297">
        <id>P77395</id>
        <label>cnoX</label>
    </interactant>
    <organismsDiffer>false</organismsDiffer>
    <experiments>2</experiments>
</comment>
<comment type="interaction">
    <interactant intactId="EBI-542385">
        <id>P0A988</id>
    </interactant>
    <interactant intactId="EBI-1037359">
        <id>Q47155</id>
        <label>dinB</label>
    </interactant>
    <organismsDiffer>false</organismsDiffer>
    <experiments>2</experiments>
</comment>
<comment type="interaction">
    <interactant intactId="EBI-542385">
        <id>P0A988</id>
    </interactant>
    <interactant intactId="EBI-549111">
        <id>P10443</id>
        <label>dnaE</label>
    </interactant>
    <organismsDiffer>false</organismsDiffer>
    <experiments>19</experiments>
</comment>
<comment type="interaction">
    <interactant intactId="EBI-542385">
        <id>P0A988</id>
    </interactant>
    <interactant intactId="EBI-542385">
        <id>P0A988</id>
        <label>dnaN</label>
    </interactant>
    <organismsDiffer>false</organismsDiffer>
    <experiments>9</experiments>
</comment>
<comment type="interaction">
    <interactant intactId="EBI-542385">
        <id>P0A988</id>
    </interactant>
    <interactant intactId="EBI-549131">
        <id>P03007</id>
        <label>dnaQ</label>
    </interactant>
    <organismsDiffer>false</organismsDiffer>
    <experiments>6</experiments>
</comment>
<comment type="interaction">
    <interactant intactId="EBI-542385">
        <id>P0A988</id>
    </interactant>
    <interactant intactId="EBI-549140">
        <id>P06710</id>
        <label>dnaX</label>
    </interactant>
    <organismsDiffer>false</organismsDiffer>
    <experiments>4</experiments>
</comment>
<comment type="interaction">
    <interactant intactId="EBI-542385">
        <id>P0A988</id>
    </interactant>
    <interactant intactId="EBI-545453">
        <id>P69931</id>
        <label>hda</label>
    </interactant>
    <organismsDiffer>false</organismsDiffer>
    <experiments>9</experiments>
</comment>
<comment type="interaction">
    <interactant intactId="EBI-542385">
        <id>P0A988</id>
    </interactant>
    <interactant intactId="EBI-549153">
        <id>P28630</id>
        <label>holA</label>
    </interactant>
    <organismsDiffer>false</organismsDiffer>
    <experiments>10</experiments>
</comment>
<comment type="interaction">
    <interactant intactId="EBI-542385">
        <id>P0A988</id>
    </interactant>
    <interactant intactId="EBI-561113">
        <id>P0AFX0</id>
        <label>hpf</label>
    </interactant>
    <organismsDiffer>false</organismsDiffer>
    <experiments>2</experiments>
</comment>
<comment type="interaction">
    <interactant intactId="EBI-542385">
        <id>P0A988</id>
    </interactant>
    <interactant intactId="EBI-546020">
        <id>P0AG07</id>
        <label>rpe</label>
    </interactant>
    <organismsDiffer>false</organismsDiffer>
    <experiments>4</experiments>
</comment>
<comment type="interaction">
    <interactant intactId="EBI-542385">
        <id>P0A988</id>
    </interactant>
    <interactant intactId="EBI-370752">
        <id>P0A8E7</id>
        <label>yajQ</label>
    </interactant>
    <organismsDiffer>false</organismsDiffer>
    <experiments>2</experiments>
</comment>
<comment type="interaction">
    <interactant intactId="EBI-542385">
        <id>P0A988</id>
    </interactant>
    <interactant intactId="EBI-555656">
        <id>P0AC53</id>
        <label>zwf</label>
    </interactant>
    <organismsDiffer>false</organismsDiffer>
    <experiments>2</experiments>
</comment>
<comment type="interaction">
    <interactant intactId="EBI-542385">
        <id>P0A988</id>
    </interactant>
    <interactant intactId="EBI-2434514">
        <id>P05845</id>
        <label>tnsE</label>
    </interactant>
    <organismsDiffer>true</organismsDiffer>
    <experiments>4</experiments>
</comment>
<comment type="subcellular location">
    <subcellularLocation>
        <location evidence="23">Cytoplasm</location>
    </subcellularLocation>
    <text evidence="23">Localizes to midcell position when chromosomes are condensed during DNA replication (PubMed:23994470).</text>
</comment>
<comment type="alternative products">
    <event type="alternative promoter"/>
    <isoform>
        <id>P0A988-1</id>
        <name evidence="29">Beta</name>
        <sequence type="displayed"/>
    </isoform>
    <isoform>
        <id>P0A988-2</id>
        <name evidence="29">Beta*</name>
        <sequence type="described" ref="VSP_059030"/>
    </isoform>
</comment>
<comment type="induction">
    <text evidence="18 25 28 29">Part of the dnaA-dnaN-recF-gyrB operon, but also transcribed from at least 3 promoters within the upstream dnaA gene, induced at 42 degrees Celsius (PubMed:2851700). Induced 1.5-fold by hydroxyurea (PubMed:20005847). A shorter isoform, beta* is induced by UV treatment and also at low levels in late logarithmic/early stationary phase growth (at protein level) (PubMed:8576210). Beta* transcription induced by naldixic acid (PubMed:8576211).</text>
</comment>
<comment type="biotechnology">
    <text evidence="15">Small molecules can bind to the hydrophobic cleft and inhibit binding of various protein factors, suggesting this may make and attractive antibiotic target (PubMed:18678908).</text>
</comment>
<comment type="miscellaneous">
    <text evidence="12">The temperature- and UV-sensitive allele dnaN159 does not grow at temperatures higher than 37 degrees Celsius. The global SOS response is chronically induced. The UV-sensitivity of dnaN159 is dependent upon Pol IV (dinB), it has an enhanced Pol V-dependent mutation rate (umuC, umuD), and is absolutely dependent on the polymerase activity of Pol I (polA) for viability.</text>
</comment>
<comment type="miscellaneous">
    <molecule>Isoform Beta*</molecule>
    <text evidence="28 29">Beta* protein is expressed in late logarithmic/early stationary phase and induced by UV treatment (PubMed:8576210). Mutations in the Shine-Dalgarno region of beta* (some silent at the amino acid level) decrease production of beta* (PubMed:8576211).</text>
</comment>
<comment type="similarity">
    <text evidence="34">Belongs to the beta sliding clamp family.</text>
</comment>
<proteinExistence type="evidence at protein level"/>
<feature type="chain" id="PRO_0000105434" description="Beta sliding clamp">
    <location>
        <begin position="1"/>
        <end position="366"/>
    </location>
</feature>
<feature type="region of interest" description="1" evidence="34">
    <location>
        <begin position="1"/>
        <end position="120"/>
    </location>
</feature>
<feature type="region of interest" description="2" evidence="34">
    <location>
        <begin position="129"/>
        <end position="243"/>
    </location>
</feature>
<feature type="region of interest" description="3" evidence="34">
    <location>
        <begin position="245"/>
        <end position="365"/>
    </location>
</feature>
<feature type="binding site" evidence="36">
    <location>
        <position position="24"/>
    </location>
    <ligand>
        <name>DNA</name>
        <dbReference type="ChEBI" id="CHEBI:16991"/>
    </ligand>
</feature>
<feature type="binding site" evidence="14">
    <location>
        <position position="73"/>
    </location>
    <ligand>
        <name>DNA</name>
        <dbReference type="ChEBI" id="CHEBI:16991"/>
    </ligand>
</feature>
<feature type="binding site" evidence="36">
    <location>
        <position position="149"/>
    </location>
    <ligand>
        <name>DNA</name>
        <dbReference type="ChEBI" id="CHEBI:16991"/>
    </ligand>
</feature>
<feature type="binding site" evidence="36">
    <location>
        <begin position="153"/>
        <end position="154"/>
    </location>
    <ligand>
        <name>DNA</name>
        <dbReference type="ChEBI" id="CHEBI:16991"/>
    </ligand>
</feature>
<feature type="splice variant" id="VSP_059030" description="In isoform Beta*." evidence="29">
    <location>
        <begin position="1"/>
        <end position="134"/>
    </location>
</feature>
<feature type="mutagenesis site" description="Mild defect in DNA replication, impaired loading of clamp on DNA, polymerase speed is wild-type. More severe replication defect and very poor clamp loading; when associated with A-149." evidence="14">
    <original>R</original>
    <variation>A</variation>
    <location>
        <position position="24"/>
    </location>
</feature>
<feature type="mutagenesis site" description="In dnaN159; a temperature- and UV-sensitive mutation, displays altered DNA polymerase usage, chronically induced SOS response; when associated with A-174." evidence="12">
    <original>G</original>
    <variation>E</variation>
    <location>
        <position position="66"/>
    </location>
</feature>
<feature type="mutagenesis site" description="Reduction of synthesis of beta*, probably due to mutation of its promoter." evidence="29">
    <original>A</original>
    <variation>T</variation>
    <location>
        <position position="133"/>
    </location>
</feature>
<feature type="mutagenesis site" description="3-fold reduction of synthesis of beta*, probably due to loss of its start codon." evidence="29">
    <original>M</original>
    <variation>L</variation>
    <location>
        <position position="135"/>
    </location>
</feature>
<feature type="mutagenesis site" description="No effect on synthesis of beta*." evidence="29">
    <original>M</original>
    <variation>L</variation>
    <location>
        <position position="146"/>
    </location>
</feature>
<feature type="mutagenesis site" description="Mild defect in DNA replication, impaired loading of clamp on DNA, polymerase speed is wild-type. More severe replication defect and very poor clamp loading; when associated with A-24." evidence="14">
    <original>Q</original>
    <variation>A</variation>
    <location>
        <position position="149"/>
    </location>
</feature>
<feature type="mutagenesis site" description="Very poor loading of clamp on DNA, polymerase speed is wild-type." evidence="14">
    <original>YY</original>
    <variation>SS</variation>
    <location>
        <begin position="153"/>
        <end position="154"/>
    </location>
</feature>
<feature type="mutagenesis site" description="In dnaN159; a temperature- and UV-sensitive mutation, displays altered DNA polymerase usage, chronically induced SOS response; when associated with A-66." evidence="12 27">
    <original>G</original>
    <variation>A</variation>
    <location>
        <position position="174"/>
    </location>
</feature>
<feature type="mutagenesis site" description="In dnaN806; temperature sensitive." evidence="27">
    <location>
        <begin position="265"/>
        <end position="366"/>
    </location>
</feature>
<feature type="mutagenesis site" description="Monomeric in solution, binds very tightly to subunit delta (holA). The monomer binds tightly to linear and circular DNA. Cannot bind both Pol III and IV simultaneously." evidence="3 13 14">
    <original>IL</original>
    <variation>AA</variation>
    <location>
        <begin position="272"/>
        <end position="273"/>
    </location>
</feature>
<feature type="strand" evidence="59">
    <location>
        <begin position="2"/>
        <end position="6"/>
    </location>
</feature>
<feature type="helix" evidence="59">
    <location>
        <begin position="7"/>
        <end position="17"/>
    </location>
</feature>
<feature type="turn" evidence="61">
    <location>
        <begin position="18"/>
        <end position="20"/>
    </location>
</feature>
<feature type="strand" evidence="58">
    <location>
        <begin position="26"/>
        <end position="28"/>
    </location>
</feature>
<feature type="helix" evidence="59">
    <location>
        <begin position="29"/>
        <end position="31"/>
    </location>
</feature>
<feature type="strand" evidence="59">
    <location>
        <begin position="32"/>
        <end position="38"/>
    </location>
</feature>
<feature type="strand" evidence="59">
    <location>
        <begin position="41"/>
        <end position="47"/>
    </location>
</feature>
<feature type="strand" evidence="59">
    <location>
        <begin position="49"/>
        <end position="58"/>
    </location>
</feature>
<feature type="strand" evidence="59">
    <location>
        <begin position="66"/>
        <end position="71"/>
    </location>
</feature>
<feature type="helix" evidence="59">
    <location>
        <begin position="72"/>
        <end position="81"/>
    </location>
</feature>
<feature type="strand" evidence="59">
    <location>
        <begin position="87"/>
        <end position="93"/>
    </location>
</feature>
<feature type="strand" evidence="59">
    <location>
        <begin position="96"/>
        <end position="101"/>
    </location>
</feature>
<feature type="strand" evidence="59">
    <location>
        <begin position="104"/>
        <end position="109"/>
    </location>
</feature>
<feature type="helix" evidence="59">
    <location>
        <begin position="113"/>
        <end position="115"/>
    </location>
</feature>
<feature type="strand" evidence="59">
    <location>
        <begin position="126"/>
        <end position="131"/>
    </location>
</feature>
<feature type="helix" evidence="59">
    <location>
        <begin position="132"/>
        <end position="142"/>
    </location>
</feature>
<feature type="helix" evidence="59">
    <location>
        <begin position="143"/>
        <end position="145"/>
    </location>
</feature>
<feature type="helix" evidence="59">
    <location>
        <begin position="153"/>
        <end position="156"/>
    </location>
</feature>
<feature type="strand" evidence="59">
    <location>
        <begin position="157"/>
        <end position="163"/>
    </location>
</feature>
<feature type="strand" evidence="59">
    <location>
        <begin position="166"/>
        <end position="172"/>
    </location>
</feature>
<feature type="strand" evidence="59">
    <location>
        <begin position="174"/>
        <end position="183"/>
    </location>
</feature>
<feature type="strand" evidence="59">
    <location>
        <begin position="190"/>
        <end position="195"/>
    </location>
</feature>
<feature type="helix" evidence="59">
    <location>
        <begin position="197"/>
        <end position="205"/>
    </location>
</feature>
<feature type="strand" evidence="61">
    <location>
        <begin position="209"/>
        <end position="211"/>
    </location>
</feature>
<feature type="strand" evidence="59">
    <location>
        <begin position="213"/>
        <end position="218"/>
    </location>
</feature>
<feature type="strand" evidence="59">
    <location>
        <begin position="220"/>
        <end position="227"/>
    </location>
</feature>
<feature type="strand" evidence="59">
    <location>
        <begin position="230"/>
        <end position="235"/>
    </location>
</feature>
<feature type="helix" evidence="59">
    <location>
        <begin position="244"/>
        <end position="246"/>
    </location>
</feature>
<feature type="strand" evidence="59">
    <location>
        <begin position="254"/>
        <end position="259"/>
    </location>
</feature>
<feature type="helix" evidence="59">
    <location>
        <begin position="260"/>
        <end position="271"/>
    </location>
</feature>
<feature type="turn" evidence="59">
    <location>
        <begin position="276"/>
        <end position="278"/>
    </location>
</feature>
<feature type="strand" evidence="59">
    <location>
        <begin position="280"/>
        <end position="286"/>
    </location>
</feature>
<feature type="strand" evidence="59">
    <location>
        <begin position="289"/>
        <end position="295"/>
    </location>
</feature>
<feature type="turn" evidence="62">
    <location>
        <begin position="297"/>
        <end position="299"/>
    </location>
</feature>
<feature type="strand" evidence="59">
    <location>
        <begin position="301"/>
        <end position="307"/>
    </location>
</feature>
<feature type="strand" evidence="60">
    <location>
        <begin position="309"/>
        <end position="312"/>
    </location>
</feature>
<feature type="strand" evidence="59">
    <location>
        <begin position="315"/>
        <end position="320"/>
    </location>
</feature>
<feature type="helix" evidence="59">
    <location>
        <begin position="321"/>
        <end position="331"/>
    </location>
</feature>
<feature type="strand" evidence="59">
    <location>
        <begin position="334"/>
        <end position="340"/>
    </location>
</feature>
<feature type="strand" evidence="58">
    <location>
        <begin position="343"/>
        <end position="345"/>
    </location>
</feature>
<feature type="strand" evidence="59">
    <location>
        <begin position="347"/>
        <end position="351"/>
    </location>
</feature>
<feature type="strand" evidence="59">
    <location>
        <begin position="354"/>
        <end position="361"/>
    </location>
</feature>
<gene>
    <name type="primary">dnaN</name>
    <name type="ordered locus">b3701</name>
    <name type="ordered locus">JW3678</name>
</gene>
<name>DPO3B_ECOLI</name>
<accession>P0A988</accession>
<accession>P00583</accession>
<accession>Q2M813</accession>
<organism>
    <name type="scientific">Escherichia coli (strain K12)</name>
    <dbReference type="NCBI Taxonomy" id="83333"/>
    <lineage>
        <taxon>Bacteria</taxon>
        <taxon>Pseudomonadati</taxon>
        <taxon>Pseudomonadota</taxon>
        <taxon>Gammaproteobacteria</taxon>
        <taxon>Enterobacterales</taxon>
        <taxon>Enterobacteriaceae</taxon>
        <taxon>Escherichia</taxon>
    </lineage>
</organism>
<keyword id="KW-0002">3D-structure</keyword>
<keyword id="KW-0877">Alternative promoter usage</keyword>
<keyword id="KW-0963">Cytoplasm</keyword>
<keyword id="KW-0235">DNA replication</keyword>
<keyword id="KW-0238">DNA-binding</keyword>
<keyword id="KW-0239">DNA-directed DNA polymerase</keyword>
<keyword id="KW-0548">Nucleotidyltransferase</keyword>
<keyword id="KW-1185">Reference proteome</keyword>
<keyword id="KW-0808">Transferase</keyword>
<dbReference type="EMBL" id="J01602">
    <property type="protein sequence ID" value="AAB59150.1"/>
    <property type="molecule type" value="Genomic_DNA"/>
</dbReference>
<dbReference type="EMBL" id="L10328">
    <property type="protein sequence ID" value="AAA62052.1"/>
    <property type="molecule type" value="Genomic_DNA"/>
</dbReference>
<dbReference type="EMBL" id="U00096">
    <property type="protein sequence ID" value="AAC76724.1"/>
    <property type="molecule type" value="Genomic_DNA"/>
</dbReference>
<dbReference type="EMBL" id="AP009048">
    <property type="protein sequence ID" value="BAE77593.1"/>
    <property type="molecule type" value="Genomic_DNA"/>
</dbReference>
<dbReference type="EMBL" id="AH000880">
    <property type="protein sequence ID" value="AAA23695.1"/>
    <property type="molecule type" value="Genomic_DNA"/>
</dbReference>
<dbReference type="EMBL" id="M13822">
    <property type="protein sequence ID" value="AAA24512.1"/>
    <property type="molecule type" value="Genomic_DNA"/>
</dbReference>
<dbReference type="EMBL" id="K02179">
    <property type="protein sequence ID" value="AAA24510.1"/>
    <property type="molecule type" value="Genomic_DNA"/>
</dbReference>
<dbReference type="EMBL" id="X04341">
    <property type="protein sequence ID" value="CAA27869.1"/>
    <property type="molecule type" value="Genomic_DNA"/>
</dbReference>
<dbReference type="PIR" id="A91510">
    <property type="entry name" value="DJEC3B"/>
</dbReference>
<dbReference type="RefSeq" id="NP_418156.1">
    <property type="nucleotide sequence ID" value="NC_000913.3"/>
</dbReference>
<dbReference type="RefSeq" id="WP_000673464.1">
    <property type="nucleotide sequence ID" value="NZ_STEB01000015.1"/>
</dbReference>
<dbReference type="PDB" id="1JQJ">
    <property type="method" value="X-ray"/>
    <property type="resolution" value="2.90 A"/>
    <property type="chains" value="A/B=1-366"/>
</dbReference>
<dbReference type="PDB" id="1JQL">
    <property type="method" value="X-ray"/>
    <property type="resolution" value="2.50 A"/>
    <property type="chains" value="A=1-366"/>
</dbReference>
<dbReference type="PDB" id="1MMI">
    <property type="method" value="X-ray"/>
    <property type="resolution" value="1.85 A"/>
    <property type="chains" value="A/B=1-366"/>
</dbReference>
<dbReference type="PDB" id="1OK7">
    <property type="method" value="X-ray"/>
    <property type="resolution" value="1.65 A"/>
    <property type="chains" value="A/B=1-366"/>
</dbReference>
<dbReference type="PDB" id="1UNN">
    <property type="method" value="X-ray"/>
    <property type="resolution" value="1.90 A"/>
    <property type="chains" value="A/B=1-366"/>
</dbReference>
<dbReference type="PDB" id="2POL">
    <property type="method" value="X-ray"/>
    <property type="resolution" value="2.50 A"/>
    <property type="chains" value="A/B=1-366"/>
</dbReference>
<dbReference type="PDB" id="2XUR">
    <property type="method" value="X-ray"/>
    <property type="resolution" value="1.90 A"/>
    <property type="chains" value="A/B=1-366"/>
</dbReference>
<dbReference type="PDB" id="3BEP">
    <property type="method" value="X-ray"/>
    <property type="resolution" value="1.92 A"/>
    <property type="chains" value="A/B=1-366"/>
</dbReference>
<dbReference type="PDB" id="3D1E">
    <property type="method" value="X-ray"/>
    <property type="resolution" value="1.90 A"/>
    <property type="chains" value="A/B=1-366"/>
</dbReference>
<dbReference type="PDB" id="3D1F">
    <property type="method" value="X-ray"/>
    <property type="resolution" value="2.00 A"/>
    <property type="chains" value="A/B=1-366"/>
</dbReference>
<dbReference type="PDB" id="3D1G">
    <property type="method" value="X-ray"/>
    <property type="resolution" value="1.64 A"/>
    <property type="chains" value="A/B=1-366"/>
</dbReference>
<dbReference type="PDB" id="3F1V">
    <property type="method" value="X-ray"/>
    <property type="resolution" value="1.77 A"/>
    <property type="chains" value="A/B=1-366"/>
</dbReference>
<dbReference type="PDB" id="3PWE">
    <property type="method" value="X-ray"/>
    <property type="resolution" value="2.20 A"/>
    <property type="chains" value="A/B=1-366"/>
</dbReference>
<dbReference type="PDB" id="3Q4J">
    <property type="method" value="X-ray"/>
    <property type="resolution" value="2.30 A"/>
    <property type="chains" value="A/B/C/D/E/F=1-366"/>
</dbReference>
<dbReference type="PDB" id="3Q4K">
    <property type="method" value="X-ray"/>
    <property type="resolution" value="2.60 A"/>
    <property type="chains" value="A/B=1-366"/>
</dbReference>
<dbReference type="PDB" id="3Q4L">
    <property type="method" value="X-ray"/>
    <property type="resolution" value="1.95 A"/>
    <property type="chains" value="A/B=1-366"/>
</dbReference>
<dbReference type="PDB" id="3QSB">
    <property type="method" value="X-ray"/>
    <property type="resolution" value="1.90 A"/>
    <property type="chains" value="A/B=1-366"/>
</dbReference>
<dbReference type="PDB" id="4K3K">
    <property type="method" value="X-ray"/>
    <property type="resolution" value="1.85 A"/>
    <property type="chains" value="A/B=1-366"/>
</dbReference>
<dbReference type="PDB" id="4K3L">
    <property type="method" value="X-ray"/>
    <property type="resolution" value="1.50 A"/>
    <property type="chains" value="A/B=1-366"/>
</dbReference>
<dbReference type="PDB" id="4K3M">
    <property type="method" value="X-ray"/>
    <property type="resolution" value="1.85 A"/>
    <property type="chains" value="A/B=1-366"/>
</dbReference>
<dbReference type="PDB" id="4K3O">
    <property type="method" value="X-ray"/>
    <property type="resolution" value="2.00 A"/>
    <property type="chains" value="A/B=1-366"/>
</dbReference>
<dbReference type="PDB" id="4K3P">
    <property type="method" value="X-ray"/>
    <property type="resolution" value="2.15 A"/>
    <property type="chains" value="A/B=1-366"/>
</dbReference>
<dbReference type="PDB" id="4K3Q">
    <property type="method" value="X-ray"/>
    <property type="resolution" value="1.85 A"/>
    <property type="chains" value="A/B=1-366"/>
</dbReference>
<dbReference type="PDB" id="4K3R">
    <property type="method" value="X-ray"/>
    <property type="resolution" value="1.86 A"/>
    <property type="chains" value="A/B=1-366"/>
</dbReference>
<dbReference type="PDB" id="4K3S">
    <property type="method" value="X-ray"/>
    <property type="resolution" value="1.75 A"/>
    <property type="chains" value="A/B=1-366"/>
</dbReference>
<dbReference type="PDB" id="4MJP">
    <property type="method" value="X-ray"/>
    <property type="resolution" value="1.86 A"/>
    <property type="chains" value="A/B=1-366"/>
</dbReference>
<dbReference type="PDB" id="4MJQ">
    <property type="method" value="X-ray"/>
    <property type="resolution" value="1.73 A"/>
    <property type="chains" value="A/B=1-366"/>
</dbReference>
<dbReference type="PDB" id="4MJR">
    <property type="method" value="X-ray"/>
    <property type="resolution" value="1.62 A"/>
    <property type="chains" value="A/B=1-366"/>
</dbReference>
<dbReference type="PDB" id="4N94">
    <property type="method" value="X-ray"/>
    <property type="resolution" value="1.73 A"/>
    <property type="chains" value="A/B=1-366"/>
</dbReference>
<dbReference type="PDB" id="4N95">
    <property type="method" value="X-ray"/>
    <property type="resolution" value="1.80 A"/>
    <property type="chains" value="A/B=1-366"/>
</dbReference>
<dbReference type="PDB" id="4N96">
    <property type="method" value="X-ray"/>
    <property type="resolution" value="1.70 A"/>
    <property type="chains" value="A/B=1-366"/>
</dbReference>
<dbReference type="PDB" id="4N97">
    <property type="method" value="X-ray"/>
    <property type="resolution" value="1.97 A"/>
    <property type="chains" value="A/B=1-366"/>
</dbReference>
<dbReference type="PDB" id="4N98">
    <property type="method" value="X-ray"/>
    <property type="resolution" value="1.70 A"/>
    <property type="chains" value="A/B=1-366"/>
</dbReference>
<dbReference type="PDB" id="4N99">
    <property type="method" value="X-ray"/>
    <property type="resolution" value="2.30 A"/>
    <property type="chains" value="A/B=1-366"/>
</dbReference>
<dbReference type="PDB" id="4N9A">
    <property type="method" value="X-ray"/>
    <property type="resolution" value="1.90 A"/>
    <property type="chains" value="A/B=1-366"/>
</dbReference>
<dbReference type="PDB" id="5FKU">
    <property type="method" value="EM"/>
    <property type="resolution" value="8.34 A"/>
    <property type="chains" value="B/C=1-366"/>
</dbReference>
<dbReference type="PDB" id="5FKV">
    <property type="method" value="EM"/>
    <property type="resolution" value="8.00 A"/>
    <property type="chains" value="B/C=1-366"/>
</dbReference>
<dbReference type="PDB" id="5FKW">
    <property type="method" value="EM"/>
    <property type="resolution" value="7.30 A"/>
    <property type="chains" value="B/C=1-366"/>
</dbReference>
<dbReference type="PDB" id="5M1S">
    <property type="method" value="EM"/>
    <property type="resolution" value="6.70 A"/>
    <property type="chains" value="B/C=1-366"/>
</dbReference>
<dbReference type="PDB" id="5X06">
    <property type="method" value="X-ray"/>
    <property type="resolution" value="3.24 A"/>
    <property type="chains" value="A/B/C/D=1-366"/>
</dbReference>
<dbReference type="PDB" id="6E8E">
    <property type="method" value="X-ray"/>
    <property type="resolution" value="2.25 A"/>
    <property type="chains" value="A/B=1-366"/>
</dbReference>
<dbReference type="PDB" id="6FVL">
    <property type="method" value="X-ray"/>
    <property type="resolution" value="1.98 A"/>
    <property type="chains" value="A/B/C/D=1-366"/>
</dbReference>
<dbReference type="PDB" id="6FVM">
    <property type="method" value="X-ray"/>
    <property type="resolution" value="1.63 A"/>
    <property type="chains" value="A/B=1-366"/>
</dbReference>
<dbReference type="PDB" id="7AZ5">
    <property type="method" value="X-ray"/>
    <property type="resolution" value="1.87 A"/>
    <property type="chains" value="A/B/C/D=1-366"/>
</dbReference>
<dbReference type="PDB" id="7AZ6">
    <property type="method" value="X-ray"/>
    <property type="resolution" value="1.93 A"/>
    <property type="chains" value="A=1-366"/>
</dbReference>
<dbReference type="PDB" id="7AZ7">
    <property type="method" value="X-ray"/>
    <property type="resolution" value="1.65 A"/>
    <property type="chains" value="A=1-366"/>
</dbReference>
<dbReference type="PDB" id="7AZ8">
    <property type="method" value="X-ray"/>
    <property type="resolution" value="1.61 A"/>
    <property type="chains" value="A/B=1-366"/>
</dbReference>
<dbReference type="PDB" id="7AZC">
    <property type="method" value="X-ray"/>
    <property type="resolution" value="1.77 A"/>
    <property type="chains" value="A/B/C/D=1-366"/>
</dbReference>
<dbReference type="PDB" id="7AZD">
    <property type="method" value="X-ray"/>
    <property type="resolution" value="2.19 A"/>
    <property type="chains" value="A/B/C/D=1-366"/>
</dbReference>
<dbReference type="PDB" id="7AZE">
    <property type="method" value="X-ray"/>
    <property type="resolution" value="1.82 A"/>
    <property type="chains" value="A/B=1-366"/>
</dbReference>
<dbReference type="PDB" id="7AZF">
    <property type="method" value="X-ray"/>
    <property type="resolution" value="1.93 A"/>
    <property type="chains" value="A/B/C/D=1-366"/>
</dbReference>
<dbReference type="PDB" id="7AZG">
    <property type="method" value="X-ray"/>
    <property type="resolution" value="2.92 A"/>
    <property type="chains" value="A/B/C/D/E/F/G/H=1-366"/>
</dbReference>
<dbReference type="PDB" id="7AZK">
    <property type="method" value="X-ray"/>
    <property type="resolution" value="2.05 A"/>
    <property type="chains" value="A/B/C/D=1-366"/>
</dbReference>
<dbReference type="PDB" id="7AZL">
    <property type="method" value="X-ray"/>
    <property type="resolution" value="2.42 A"/>
    <property type="chains" value="A/B/C/D=1-366"/>
</dbReference>
<dbReference type="PDB" id="8CIX">
    <property type="method" value="X-ray"/>
    <property type="resolution" value="1.76 A"/>
    <property type="chains" value="A=1-366"/>
</dbReference>
<dbReference type="PDB" id="8CIY">
    <property type="method" value="X-ray"/>
    <property type="resolution" value="1.54 A"/>
    <property type="chains" value="A=1-366"/>
</dbReference>
<dbReference type="PDB" id="8CIZ">
    <property type="method" value="X-ray"/>
    <property type="resolution" value="2.27 A"/>
    <property type="chains" value="A/B=1-366"/>
</dbReference>
<dbReference type="PDB" id="8GIY">
    <property type="method" value="EM"/>
    <property type="resolution" value="3.70 A"/>
    <property type="chains" value="H/I=1-366"/>
</dbReference>
<dbReference type="PDB" id="8GIZ">
    <property type="method" value="EM"/>
    <property type="resolution" value="2.70 A"/>
    <property type="chains" value="H/I=1-366"/>
</dbReference>
<dbReference type="PDB" id="8GJ0">
    <property type="method" value="EM"/>
    <property type="resolution" value="2.90 A"/>
    <property type="chains" value="H/I=1-366"/>
</dbReference>
<dbReference type="PDB" id="8GJ1">
    <property type="method" value="EM"/>
    <property type="resolution" value="3.00 A"/>
    <property type="chains" value="H/I=1-366"/>
</dbReference>
<dbReference type="PDB" id="8GJ2">
    <property type="method" value="EM"/>
    <property type="resolution" value="2.60 A"/>
    <property type="chains" value="H/I=1-366"/>
</dbReference>
<dbReference type="PDB" id="8PAT">
    <property type="method" value="X-ray"/>
    <property type="resolution" value="1.45 A"/>
    <property type="chains" value="A=1-366"/>
</dbReference>
<dbReference type="PDB" id="8PAY">
    <property type="method" value="X-ray"/>
    <property type="resolution" value="1.21 A"/>
    <property type="chains" value="A=1-366"/>
</dbReference>
<dbReference type="PDB" id="8VAL">
    <property type="method" value="EM"/>
    <property type="resolution" value="3.70 A"/>
    <property type="chains" value="F/G=1-366"/>
</dbReference>
<dbReference type="PDB" id="8VAM">
    <property type="method" value="EM"/>
    <property type="resolution" value="3.90 A"/>
    <property type="chains" value="F/G=1-366"/>
</dbReference>
<dbReference type="PDB" id="8VAN">
    <property type="method" value="EM"/>
    <property type="resolution" value="7.70 A"/>
    <property type="chains" value="F/G=1-366"/>
</dbReference>
<dbReference type="PDB" id="8VAP">
    <property type="method" value="EM"/>
    <property type="resolution" value="3.00 A"/>
    <property type="chains" value="F/G=1-366"/>
</dbReference>
<dbReference type="PDB" id="8VAQ">
    <property type="method" value="EM"/>
    <property type="resolution" value="3.80 A"/>
    <property type="chains" value="F/G=1-366"/>
</dbReference>
<dbReference type="PDB" id="8VAR">
    <property type="method" value="EM"/>
    <property type="resolution" value="3.90 A"/>
    <property type="chains" value="F/G=1-366"/>
</dbReference>
<dbReference type="PDB" id="8VAS">
    <property type="method" value="EM"/>
    <property type="resolution" value="3.80 A"/>
    <property type="chains" value="F/G=1-366"/>
</dbReference>
<dbReference type="PDB" id="8VAT">
    <property type="method" value="EM"/>
    <property type="resolution" value="3.20 A"/>
    <property type="chains" value="F/G=1-366"/>
</dbReference>
<dbReference type="PDBsum" id="1JQJ"/>
<dbReference type="PDBsum" id="1JQL"/>
<dbReference type="PDBsum" id="1MMI"/>
<dbReference type="PDBsum" id="1OK7"/>
<dbReference type="PDBsum" id="1UNN"/>
<dbReference type="PDBsum" id="2POL"/>
<dbReference type="PDBsum" id="2XUR"/>
<dbReference type="PDBsum" id="3BEP"/>
<dbReference type="PDBsum" id="3D1E"/>
<dbReference type="PDBsum" id="3D1F"/>
<dbReference type="PDBsum" id="3D1G"/>
<dbReference type="PDBsum" id="3F1V"/>
<dbReference type="PDBsum" id="3PWE"/>
<dbReference type="PDBsum" id="3Q4J"/>
<dbReference type="PDBsum" id="3Q4K"/>
<dbReference type="PDBsum" id="3Q4L"/>
<dbReference type="PDBsum" id="3QSB"/>
<dbReference type="PDBsum" id="4K3K"/>
<dbReference type="PDBsum" id="4K3L"/>
<dbReference type="PDBsum" id="4K3M"/>
<dbReference type="PDBsum" id="4K3O"/>
<dbReference type="PDBsum" id="4K3P"/>
<dbReference type="PDBsum" id="4K3Q"/>
<dbReference type="PDBsum" id="4K3R"/>
<dbReference type="PDBsum" id="4K3S"/>
<dbReference type="PDBsum" id="4MJP"/>
<dbReference type="PDBsum" id="4MJQ"/>
<dbReference type="PDBsum" id="4MJR"/>
<dbReference type="PDBsum" id="4N94"/>
<dbReference type="PDBsum" id="4N95"/>
<dbReference type="PDBsum" id="4N96"/>
<dbReference type="PDBsum" id="4N97"/>
<dbReference type="PDBsum" id="4N98"/>
<dbReference type="PDBsum" id="4N99"/>
<dbReference type="PDBsum" id="4N9A"/>
<dbReference type="PDBsum" id="5FKU"/>
<dbReference type="PDBsum" id="5FKV"/>
<dbReference type="PDBsum" id="5FKW"/>
<dbReference type="PDBsum" id="5M1S"/>
<dbReference type="PDBsum" id="5X06"/>
<dbReference type="PDBsum" id="6E8E"/>
<dbReference type="PDBsum" id="6FVL"/>
<dbReference type="PDBsum" id="6FVM"/>
<dbReference type="PDBsum" id="7AZ5"/>
<dbReference type="PDBsum" id="7AZ6"/>
<dbReference type="PDBsum" id="7AZ7"/>
<dbReference type="PDBsum" id="7AZ8"/>
<dbReference type="PDBsum" id="7AZC"/>
<dbReference type="PDBsum" id="7AZD"/>
<dbReference type="PDBsum" id="7AZE"/>
<dbReference type="PDBsum" id="7AZF"/>
<dbReference type="PDBsum" id="7AZG"/>
<dbReference type="PDBsum" id="7AZK"/>
<dbReference type="PDBsum" id="7AZL"/>
<dbReference type="PDBsum" id="8CIX"/>
<dbReference type="PDBsum" id="8CIY"/>
<dbReference type="PDBsum" id="8CIZ"/>
<dbReference type="PDBsum" id="8GIY"/>
<dbReference type="PDBsum" id="8GIZ"/>
<dbReference type="PDBsum" id="8GJ0"/>
<dbReference type="PDBsum" id="8GJ1"/>
<dbReference type="PDBsum" id="8GJ2"/>
<dbReference type="PDBsum" id="8PAT"/>
<dbReference type="PDBsum" id="8PAY"/>
<dbReference type="PDBsum" id="8VAL"/>
<dbReference type="PDBsum" id="8VAM"/>
<dbReference type="PDBsum" id="8VAN"/>
<dbReference type="PDBsum" id="8VAP"/>
<dbReference type="PDBsum" id="8VAQ"/>
<dbReference type="PDBsum" id="8VAR"/>
<dbReference type="PDBsum" id="8VAS"/>
<dbReference type="PDBsum" id="8VAT"/>
<dbReference type="EMDB" id="EMD-3198"/>
<dbReference type="EMDB" id="EMD-3201"/>
<dbReference type="EMDB" id="EMD-3202"/>
<dbReference type="EMDB" id="EMD-40079"/>
<dbReference type="EMDB" id="EMD-40080"/>
<dbReference type="EMDB" id="EMD-40081"/>
<dbReference type="EMDB" id="EMD-40082"/>
<dbReference type="EMDB" id="EMD-40083"/>
<dbReference type="EMDB" id="EMD-4141"/>
<dbReference type="EMDB" id="EMD-43094"/>
<dbReference type="EMDB" id="EMD-43095"/>
<dbReference type="EMDB" id="EMD-43098"/>
<dbReference type="EMDB" id="EMD-43099"/>
<dbReference type="EMDB" id="EMD-43100"/>
<dbReference type="EMDB" id="EMD-43101"/>
<dbReference type="EMDB" id="EMD-43102"/>
<dbReference type="SMR" id="P0A988"/>
<dbReference type="BioGRID" id="4259535">
    <property type="interactions" value="183"/>
</dbReference>
<dbReference type="BioGRID" id="852520">
    <property type="interactions" value="9"/>
</dbReference>
<dbReference type="ComplexPortal" id="CPX-1927">
    <property type="entry name" value="DNA polymerase III, beta sliding clamp processivity factor complex"/>
</dbReference>
<dbReference type="ComplexPortal" id="CPX-1945">
    <property type="entry name" value="Regulatory inactivation of dnaA (RIDA) complex"/>
</dbReference>
<dbReference type="ComplexPortal" id="CPX-1954">
    <property type="entry name" value="hda-beta clamp complex"/>
</dbReference>
<dbReference type="DIP" id="DIP-36038N"/>
<dbReference type="FunCoup" id="P0A988">
    <property type="interactions" value="570"/>
</dbReference>
<dbReference type="IntAct" id="P0A988">
    <property type="interactions" value="39"/>
</dbReference>
<dbReference type="MINT" id="P0A988"/>
<dbReference type="STRING" id="511145.b3701"/>
<dbReference type="BindingDB" id="P0A988"/>
<dbReference type="ChEMBL" id="CHEMBL3562169"/>
<dbReference type="DrugBank" id="DB06998">
    <property type="generic name" value="[(5R)-5-(2,3-dibromo-5-ethoxy-4-hydroxybenzyl)-4-oxo-2-thioxo-1,3-thiazolidin-3-yl]acetic acid"/>
</dbReference>
<dbReference type="jPOST" id="P0A988"/>
<dbReference type="PaxDb" id="511145-b3701"/>
<dbReference type="EnsemblBacteria" id="AAC76724">
    <property type="protein sequence ID" value="AAC76724"/>
    <property type="gene ID" value="b3701"/>
</dbReference>
<dbReference type="GeneID" id="93778442"/>
<dbReference type="GeneID" id="948218"/>
<dbReference type="KEGG" id="ecj:JW3678"/>
<dbReference type="KEGG" id="eco:b3701"/>
<dbReference type="KEGG" id="ecoc:C3026_20065"/>
<dbReference type="PATRIC" id="fig|1411691.4.peg.3002"/>
<dbReference type="EchoBASE" id="EB0238"/>
<dbReference type="eggNOG" id="COG0592">
    <property type="taxonomic scope" value="Bacteria"/>
</dbReference>
<dbReference type="HOGENOM" id="CLU_038149_4_2_6"/>
<dbReference type="InParanoid" id="P0A988"/>
<dbReference type="OMA" id="YLIMPVR"/>
<dbReference type="OrthoDB" id="8421503at2"/>
<dbReference type="PhylomeDB" id="P0A988"/>
<dbReference type="BioCyc" id="EcoCyc:EG10242-MONOMER"/>
<dbReference type="BioCyc" id="MetaCyc:EG10242-MONOMER"/>
<dbReference type="EvolutionaryTrace" id="P0A988"/>
<dbReference type="PRO" id="PR:P0A988"/>
<dbReference type="Proteomes" id="UP000000625">
    <property type="component" value="Chromosome"/>
</dbReference>
<dbReference type="GO" id="GO:0005829">
    <property type="term" value="C:cytosol"/>
    <property type="evidence" value="ECO:0000314"/>
    <property type="project" value="EcoCyc"/>
</dbReference>
<dbReference type="GO" id="GO:0009360">
    <property type="term" value="C:DNA polymerase III complex"/>
    <property type="evidence" value="ECO:0000314"/>
    <property type="project" value="EcoCyc"/>
</dbReference>
<dbReference type="GO" id="GO:1990085">
    <property type="term" value="C:Hda-beta clamp complex"/>
    <property type="evidence" value="ECO:0000353"/>
    <property type="project" value="ComplexPortal"/>
</dbReference>
<dbReference type="GO" id="GO:1990078">
    <property type="term" value="C:replication inhibiting complex"/>
    <property type="evidence" value="ECO:0000353"/>
    <property type="project" value="ComplexPortal"/>
</dbReference>
<dbReference type="GO" id="GO:0030894">
    <property type="term" value="C:replisome"/>
    <property type="evidence" value="ECO:0000303"/>
    <property type="project" value="ComplexPortal"/>
</dbReference>
<dbReference type="GO" id="GO:0008408">
    <property type="term" value="F:3'-5' exonuclease activity"/>
    <property type="evidence" value="ECO:0007669"/>
    <property type="project" value="InterPro"/>
</dbReference>
<dbReference type="GO" id="GO:0003677">
    <property type="term" value="F:DNA binding"/>
    <property type="evidence" value="ECO:0000314"/>
    <property type="project" value="EcoCyc"/>
</dbReference>
<dbReference type="GO" id="GO:0003887">
    <property type="term" value="F:DNA-directed DNA polymerase activity"/>
    <property type="evidence" value="ECO:0007669"/>
    <property type="project" value="UniProtKB-KW"/>
</dbReference>
<dbReference type="GO" id="GO:0042802">
    <property type="term" value="F:identical protein binding"/>
    <property type="evidence" value="ECO:0000353"/>
    <property type="project" value="IntAct"/>
</dbReference>
<dbReference type="GO" id="GO:0042803">
    <property type="term" value="F:protein homodimerization activity"/>
    <property type="evidence" value="ECO:0000314"/>
    <property type="project" value="EcoCyc"/>
</dbReference>
<dbReference type="GO" id="GO:0044787">
    <property type="term" value="P:bacterial-type DNA replication"/>
    <property type="evidence" value="ECO:0000314"/>
    <property type="project" value="EcoCyc"/>
</dbReference>
<dbReference type="GO" id="GO:0006974">
    <property type="term" value="P:DNA damage response"/>
    <property type="evidence" value="ECO:0000270"/>
    <property type="project" value="EcoliWiki"/>
</dbReference>
<dbReference type="GO" id="GO:0006271">
    <property type="term" value="P:DNA strand elongation involved in DNA replication"/>
    <property type="evidence" value="ECO:0000314"/>
    <property type="project" value="EcoCyc"/>
</dbReference>
<dbReference type="GO" id="GO:0006261">
    <property type="term" value="P:DNA-templated DNA replication"/>
    <property type="evidence" value="ECO:0000303"/>
    <property type="project" value="ComplexPortal"/>
</dbReference>
<dbReference type="GO" id="GO:0042276">
    <property type="term" value="P:error-prone translesion synthesis"/>
    <property type="evidence" value="ECO:0000315"/>
    <property type="project" value="EcoCyc"/>
</dbReference>
<dbReference type="GO" id="GO:0032297">
    <property type="term" value="P:negative regulation of DNA-templated DNA replication initiation"/>
    <property type="evidence" value="ECO:0000303"/>
    <property type="project" value="ComplexPortal"/>
</dbReference>
<dbReference type="GO" id="GO:0030174">
    <property type="term" value="P:regulation of DNA-templated DNA replication initiation"/>
    <property type="evidence" value="ECO:0000303"/>
    <property type="project" value="ComplexPortal"/>
</dbReference>
<dbReference type="CDD" id="cd00140">
    <property type="entry name" value="beta_clamp"/>
    <property type="match status" value="1"/>
</dbReference>
<dbReference type="FunFam" id="3.10.150.10:FF:000001">
    <property type="entry name" value="Beta sliding clamp"/>
    <property type="match status" value="1"/>
</dbReference>
<dbReference type="FunFam" id="3.10.150.10:FF:000002">
    <property type="entry name" value="Beta sliding clamp"/>
    <property type="match status" value="1"/>
</dbReference>
<dbReference type="FunFam" id="3.10.150.10:FF:000003">
    <property type="entry name" value="Beta sliding clamp"/>
    <property type="match status" value="1"/>
</dbReference>
<dbReference type="Gene3D" id="3.10.150.10">
    <property type="entry name" value="DNA Polymerase III, subunit A, domain 2"/>
    <property type="match status" value="3"/>
</dbReference>
<dbReference type="InterPro" id="IPR046938">
    <property type="entry name" value="DNA_clamp_sf"/>
</dbReference>
<dbReference type="InterPro" id="IPR001001">
    <property type="entry name" value="DNA_polIII_beta"/>
</dbReference>
<dbReference type="InterPro" id="IPR022635">
    <property type="entry name" value="DNA_polIII_beta_C"/>
</dbReference>
<dbReference type="InterPro" id="IPR022637">
    <property type="entry name" value="DNA_polIII_beta_cen"/>
</dbReference>
<dbReference type="InterPro" id="IPR022634">
    <property type="entry name" value="DNA_polIII_beta_N"/>
</dbReference>
<dbReference type="NCBIfam" id="TIGR00663">
    <property type="entry name" value="dnan"/>
    <property type="match status" value="1"/>
</dbReference>
<dbReference type="PANTHER" id="PTHR30478:SF0">
    <property type="entry name" value="BETA SLIDING CLAMP"/>
    <property type="match status" value="1"/>
</dbReference>
<dbReference type="PANTHER" id="PTHR30478">
    <property type="entry name" value="DNA POLYMERASE III SUBUNIT BETA"/>
    <property type="match status" value="1"/>
</dbReference>
<dbReference type="Pfam" id="PF00712">
    <property type="entry name" value="DNA_pol3_beta"/>
    <property type="match status" value="1"/>
</dbReference>
<dbReference type="Pfam" id="PF02767">
    <property type="entry name" value="DNA_pol3_beta_2"/>
    <property type="match status" value="1"/>
</dbReference>
<dbReference type="Pfam" id="PF02768">
    <property type="entry name" value="DNA_pol3_beta_3"/>
    <property type="match status" value="1"/>
</dbReference>
<dbReference type="PIRSF" id="PIRSF000804">
    <property type="entry name" value="DNA_pol_III_b"/>
    <property type="match status" value="1"/>
</dbReference>
<dbReference type="SMART" id="SM00480">
    <property type="entry name" value="POL3Bc"/>
    <property type="match status" value="1"/>
</dbReference>
<dbReference type="SUPFAM" id="SSF55979">
    <property type="entry name" value="DNA clamp"/>
    <property type="match status" value="3"/>
</dbReference>
<protein>
    <recommendedName>
        <fullName evidence="33">Beta sliding clamp</fullName>
        <shortName>Beta clamp</shortName>
        <shortName>Sliding clamp</shortName>
    </recommendedName>
    <alternativeName>
        <fullName>Beta-clamp processivity factor</fullName>
    </alternativeName>
    <alternativeName>
        <fullName>DNA polymerase III beta sliding clamp subunit</fullName>
    </alternativeName>
</protein>
<evidence type="ECO:0000269" key="1">
    <source>
    </source>
</evidence>
<evidence type="ECO:0000269" key="2">
    <source>
    </source>
</evidence>
<evidence type="ECO:0000269" key="3">
    <source>
    </source>
</evidence>
<evidence type="ECO:0000269" key="4">
    <source>
    </source>
</evidence>
<evidence type="ECO:0000269" key="5">
    <source>
    </source>
</evidence>
<evidence type="ECO:0000269" key="6">
    <source>
    </source>
</evidence>
<evidence type="ECO:0000269" key="7">
    <source>
    </source>
</evidence>
<evidence type="ECO:0000269" key="8">
    <source>
    </source>
</evidence>
<evidence type="ECO:0000269" key="9">
    <source>
    </source>
</evidence>
<evidence type="ECO:0000269" key="10">
    <source>
    </source>
</evidence>
<evidence type="ECO:0000269" key="11">
    <source>
    </source>
</evidence>
<evidence type="ECO:0000269" key="12">
    <source>
    </source>
</evidence>
<evidence type="ECO:0000269" key="13">
    <source>
    </source>
</evidence>
<evidence type="ECO:0000269" key="14">
    <source>
    </source>
</evidence>
<evidence type="ECO:0000269" key="15">
    <source>
    </source>
</evidence>
<evidence type="ECO:0000269" key="16">
    <source>
    </source>
</evidence>
<evidence type="ECO:0000269" key="17">
    <source>
    </source>
</evidence>
<evidence type="ECO:0000269" key="18">
    <source>
    </source>
</evidence>
<evidence type="ECO:0000269" key="19">
    <source>
    </source>
</evidence>
<evidence type="ECO:0000269" key="20">
    <source>
    </source>
</evidence>
<evidence type="ECO:0000269" key="21">
    <source>
    </source>
</evidence>
<evidence type="ECO:0000269" key="22">
    <source>
    </source>
</evidence>
<evidence type="ECO:0000269" key="23">
    <source>
    </source>
</evidence>
<evidence type="ECO:0000269" key="24">
    <source>
    </source>
</evidence>
<evidence type="ECO:0000269" key="25">
    <source>
    </source>
</evidence>
<evidence type="ECO:0000269" key="26">
    <source>
    </source>
</evidence>
<evidence type="ECO:0000269" key="27">
    <source>
    </source>
</evidence>
<evidence type="ECO:0000269" key="28">
    <source>
    </source>
</evidence>
<evidence type="ECO:0000269" key="29">
    <source>
    </source>
</evidence>
<evidence type="ECO:0000269" key="30">
    <source>
    </source>
</evidence>
<evidence type="ECO:0000269" key="31">
    <source>
    </source>
</evidence>
<evidence type="ECO:0000269" key="32">
    <source>
    </source>
</evidence>
<evidence type="ECO:0000303" key="33">
    <source>
    </source>
</evidence>
<evidence type="ECO:0000305" key="34"/>
<evidence type="ECO:0000305" key="35">
    <source>
    </source>
</evidence>
<evidence type="ECO:0000305" key="36">
    <source>
    </source>
</evidence>
<evidence type="ECO:0000312" key="37">
    <source>
        <dbReference type="EMBL" id="AAA23695.1"/>
    </source>
</evidence>
<evidence type="ECO:0000312" key="38">
    <source>
        <dbReference type="EMBL" id="AAA24510.1"/>
    </source>
</evidence>
<evidence type="ECO:0000312" key="39">
    <source>
        <dbReference type="EMBL" id="AAA24512.1"/>
    </source>
</evidence>
<evidence type="ECO:0000312" key="40">
    <source>
        <dbReference type="EMBL" id="AAA62052.1"/>
    </source>
</evidence>
<evidence type="ECO:0000312" key="41">
    <source>
        <dbReference type="EMBL" id="AAB59150.1"/>
    </source>
</evidence>
<evidence type="ECO:0000312" key="42">
    <source>
        <dbReference type="EMBL" id="AAC76724.1"/>
    </source>
</evidence>
<evidence type="ECO:0000312" key="43">
    <source>
        <dbReference type="EMBL" id="BAE77593.1"/>
    </source>
</evidence>
<evidence type="ECO:0000312" key="44">
    <source>
        <dbReference type="EMBL" id="CAA27869.1"/>
    </source>
</evidence>
<evidence type="ECO:0007744" key="45">
    <source>
        <dbReference type="PDB" id="1JQJ"/>
    </source>
</evidence>
<evidence type="ECO:0007744" key="46">
    <source>
        <dbReference type="PDB" id="1JQL"/>
    </source>
</evidence>
<evidence type="ECO:0007744" key="47">
    <source>
        <dbReference type="PDB" id="1MMI"/>
    </source>
</evidence>
<evidence type="ECO:0007744" key="48">
    <source>
        <dbReference type="PDB" id="1OK7"/>
    </source>
</evidence>
<evidence type="ECO:0007744" key="49">
    <source>
        <dbReference type="PDB" id="1UNN"/>
    </source>
</evidence>
<evidence type="ECO:0007744" key="50">
    <source>
        <dbReference type="PDB" id="2POL"/>
    </source>
</evidence>
<evidence type="ECO:0007744" key="51">
    <source>
        <dbReference type="PDB" id="3BEP"/>
    </source>
</evidence>
<evidence type="ECO:0007744" key="52">
    <source>
        <dbReference type="PDB" id="3D1E"/>
    </source>
</evidence>
<evidence type="ECO:0007744" key="53">
    <source>
        <dbReference type="PDB" id="3D1F"/>
    </source>
</evidence>
<evidence type="ECO:0007744" key="54">
    <source>
        <dbReference type="PDB" id="3D1G"/>
    </source>
</evidence>
<evidence type="ECO:0007744" key="55">
    <source>
        <dbReference type="PDB" id="5FKU"/>
    </source>
</evidence>
<evidence type="ECO:0007744" key="56">
    <source>
        <dbReference type="PDB" id="5FKV"/>
    </source>
</evidence>
<evidence type="ECO:0007744" key="57">
    <source>
        <dbReference type="PDB" id="5FKW"/>
    </source>
</evidence>
<evidence type="ECO:0007829" key="58">
    <source>
        <dbReference type="PDB" id="1JQL"/>
    </source>
</evidence>
<evidence type="ECO:0007829" key="59">
    <source>
        <dbReference type="PDB" id="4K3L"/>
    </source>
</evidence>
<evidence type="ECO:0007829" key="60">
    <source>
        <dbReference type="PDB" id="4MJR"/>
    </source>
</evidence>
<evidence type="ECO:0007829" key="61">
    <source>
        <dbReference type="PDB" id="7AZ8"/>
    </source>
</evidence>
<evidence type="ECO:0007829" key="62">
    <source>
        <dbReference type="PDB" id="8GJ2"/>
    </source>
</evidence>